<name>GSTT1_RAT</name>
<proteinExistence type="evidence at protein level"/>
<reference key="1">
    <citation type="journal article" date="1992" name="Biochem. J.">
        <title>An evolutionary perspective on glutathione transferases inferred from class-theta glutathione transferase cDNA sequences.</title>
        <authorList>
            <person name="Pemble S.E."/>
            <person name="Taylor J.B."/>
        </authorList>
    </citation>
    <scope>NUCLEOTIDE SEQUENCE [MRNA]</scope>
    <source>
        <strain>Wistar</strain>
        <tissue>Liver</tissue>
    </source>
</reference>
<reference key="2">
    <citation type="journal article" date="2004" name="Genome Res.">
        <title>The status, quality, and expansion of the NIH full-length cDNA project: the Mammalian Gene Collection (MGC).</title>
        <authorList>
            <consortium name="The MGC Project Team"/>
        </authorList>
    </citation>
    <scope>NUCLEOTIDE SEQUENCE [LARGE SCALE MRNA]</scope>
    <source>
        <tissue>Ovary</tissue>
    </source>
</reference>
<reference key="3">
    <citation type="journal article" date="1991" name="Biochem. J.">
        <title>Theta, a new class of glutathione transferases purified from rat and man.</title>
        <authorList>
            <person name="Meyer D.J."/>
            <person name="Coles B."/>
            <person name="Pemble S.E."/>
            <person name="Gilmore K.S."/>
            <person name="Fraser G.M."/>
            <person name="Ketterer B."/>
        </authorList>
    </citation>
    <scope>PRELIMINARY PROTEIN SEQUENCE OF 2-47; 58-95; 120-131 AND 176-193</scope>
    <source>
        <tissue>Liver</tissue>
    </source>
</reference>
<reference key="4">
    <citation type="journal article" date="1996" name="Biochem. J.">
        <title>The distribution of theta-class glutathione S-transferases in the liver and lung of mouse, rat and human.</title>
        <authorList>
            <person name="Mainwaring G.W."/>
            <person name="Williams S.M."/>
            <person name="Foster J.R."/>
            <person name="Tugwood J."/>
            <person name="Green T."/>
        </authorList>
    </citation>
    <scope>TISSUE SPECIFICITY</scope>
    <source>
        <tissue>Liver</tissue>
        <tissue>Lung</tissue>
    </source>
</reference>
<reference key="5">
    <citation type="journal article" date="2010" name="Biochim. Biophys. Acta">
        <title>Residue 234 is a master switch of the alternative-substrate activity profile of human and rodent theta class glutathione transferase T1-1.</title>
        <authorList>
            <person name="Shokeer A."/>
            <person name="Mannervik B."/>
        </authorList>
    </citation>
    <scope>FUNCTION</scope>
    <scope>CATALYTIC ACTIVITY</scope>
</reference>
<sequence>MVLELYLDLLSQPCRAIYIFAKKNNIPFQMHTVELRKGEHLSDAFAQVNPMKKVPAMKDGGFTLCESVAILLYLAHKYKVPDHWYPQDLQARARVDEYLAWQHTTLRRSCLRTLWHKVMFPVFLGEQIRPEMLAATLADLDVNVQVLEDQFLQDKDFLVGPHISLADVVAITELMHPVGGGCPVFEGRPRLAAWYRRVEAAVGKDLFLEAHEVILKVRDCPPADPVIKQKLMPRVLTMIQ</sequence>
<accession>Q01579</accession>
<feature type="initiator methionine" description="Removed">
    <location>
        <position position="1"/>
    </location>
</feature>
<feature type="chain" id="PRO_0000185942" description="Glutathione S-transferase theta-1">
    <location>
        <begin position="2"/>
        <end position="240"/>
    </location>
</feature>
<feature type="domain" description="GST N-terminal">
    <location>
        <begin position="2"/>
        <end position="82"/>
    </location>
</feature>
<feature type="domain" description="GST C-terminal">
    <location>
        <begin position="88"/>
        <end position="223"/>
    </location>
</feature>
<feature type="binding site" evidence="1">
    <location>
        <position position="40"/>
    </location>
    <ligand>
        <name>glutathione</name>
        <dbReference type="ChEBI" id="CHEBI:57925"/>
    </ligand>
</feature>
<feature type="binding site" evidence="1">
    <location>
        <begin position="53"/>
        <end position="54"/>
    </location>
    <ligand>
        <name>glutathione</name>
        <dbReference type="ChEBI" id="CHEBI:57925"/>
    </ligand>
</feature>
<feature type="binding site" evidence="1">
    <location>
        <begin position="66"/>
        <end position="67"/>
    </location>
    <ligand>
        <name>glutathione</name>
        <dbReference type="ChEBI" id="CHEBI:57925"/>
    </ligand>
</feature>
<protein>
    <recommendedName>
        <fullName>Glutathione S-transferase theta-1</fullName>
        <ecNumber>2.5.1.18</ecNumber>
    </recommendedName>
    <alternativeName>
        <fullName>GST 5-5</fullName>
    </alternativeName>
    <alternativeName>
        <fullName>GST class-theta-1</fullName>
    </alternativeName>
    <alternativeName>
        <fullName>Glutathione S-transferase 5</fullName>
    </alternativeName>
</protein>
<organism>
    <name type="scientific">Rattus norvegicus</name>
    <name type="common">Rat</name>
    <dbReference type="NCBI Taxonomy" id="10116"/>
    <lineage>
        <taxon>Eukaryota</taxon>
        <taxon>Metazoa</taxon>
        <taxon>Chordata</taxon>
        <taxon>Craniata</taxon>
        <taxon>Vertebrata</taxon>
        <taxon>Euteleostomi</taxon>
        <taxon>Mammalia</taxon>
        <taxon>Eutheria</taxon>
        <taxon>Euarchontoglires</taxon>
        <taxon>Glires</taxon>
        <taxon>Rodentia</taxon>
        <taxon>Myomorpha</taxon>
        <taxon>Muroidea</taxon>
        <taxon>Muridae</taxon>
        <taxon>Murinae</taxon>
        <taxon>Rattus</taxon>
    </lineage>
</organism>
<dbReference type="EC" id="2.5.1.18"/>
<dbReference type="EMBL" id="X67654">
    <property type="protein sequence ID" value="CAA47896.1"/>
    <property type="molecule type" value="mRNA"/>
</dbReference>
<dbReference type="EMBL" id="BC086426">
    <property type="protein sequence ID" value="AAH86426.1"/>
    <property type="molecule type" value="mRNA"/>
</dbReference>
<dbReference type="PIR" id="S27161">
    <property type="entry name" value="S27161"/>
</dbReference>
<dbReference type="RefSeq" id="NP_445745.1">
    <property type="nucleotide sequence ID" value="NM_053293.2"/>
</dbReference>
<dbReference type="SMR" id="Q01579"/>
<dbReference type="FunCoup" id="Q01579">
    <property type="interactions" value="256"/>
</dbReference>
<dbReference type="STRING" id="10116.ENSRNOP00000001669"/>
<dbReference type="BindingDB" id="Q01579"/>
<dbReference type="ChEMBL" id="CHEMBL2423"/>
<dbReference type="iPTMnet" id="Q01579"/>
<dbReference type="PhosphoSitePlus" id="Q01579"/>
<dbReference type="PaxDb" id="10116-ENSRNOP00000001669"/>
<dbReference type="Ensembl" id="ENSRNOT00000001669.5">
    <property type="protein sequence ID" value="ENSRNOP00000001669.3"/>
    <property type="gene ID" value="ENSRNOG00000049771.2"/>
</dbReference>
<dbReference type="GeneID" id="25260"/>
<dbReference type="KEGG" id="rno:25260"/>
<dbReference type="UCSC" id="RGD:2765">
    <property type="organism name" value="rat"/>
</dbReference>
<dbReference type="AGR" id="RGD:2765"/>
<dbReference type="CTD" id="2952"/>
<dbReference type="RGD" id="2765">
    <property type="gene designation" value="Gstt1"/>
</dbReference>
<dbReference type="eggNOG" id="KOG0867">
    <property type="taxonomic scope" value="Eukaryota"/>
</dbReference>
<dbReference type="GeneTree" id="ENSGT00940000156366"/>
<dbReference type="HOGENOM" id="CLU_011226_2_0_1"/>
<dbReference type="InParanoid" id="Q01579"/>
<dbReference type="OMA" id="CQYRVDE"/>
<dbReference type="OrthoDB" id="422574at2759"/>
<dbReference type="PhylomeDB" id="Q01579"/>
<dbReference type="Reactome" id="R-RNO-156590">
    <property type="pathway name" value="Glutathione conjugation"/>
</dbReference>
<dbReference type="Reactome" id="R-RNO-9753281">
    <property type="pathway name" value="Paracetamol ADME"/>
</dbReference>
<dbReference type="SABIO-RK" id="Q01579"/>
<dbReference type="PRO" id="PR:Q01579"/>
<dbReference type="Proteomes" id="UP000002494">
    <property type="component" value="Chromosome 20"/>
</dbReference>
<dbReference type="Bgee" id="ENSRNOG00000049771">
    <property type="expression patterns" value="Expressed in ovary and 19 other cell types or tissues"/>
</dbReference>
<dbReference type="ExpressionAtlas" id="Q01579">
    <property type="expression patterns" value="baseline and differential"/>
</dbReference>
<dbReference type="GO" id="GO:0005737">
    <property type="term" value="C:cytoplasm"/>
    <property type="evidence" value="ECO:0000318"/>
    <property type="project" value="GO_Central"/>
</dbReference>
<dbReference type="GO" id="GO:0005829">
    <property type="term" value="C:cytosol"/>
    <property type="evidence" value="ECO:0000266"/>
    <property type="project" value="RGD"/>
</dbReference>
<dbReference type="GO" id="GO:0047651">
    <property type="term" value="F:alkylhalidase activity"/>
    <property type="evidence" value="ECO:0000314"/>
    <property type="project" value="RGD"/>
</dbReference>
<dbReference type="GO" id="GO:0004602">
    <property type="term" value="F:glutathione peroxidase activity"/>
    <property type="evidence" value="ECO:0000314"/>
    <property type="project" value="RGD"/>
</dbReference>
<dbReference type="GO" id="GO:0004364">
    <property type="term" value="F:glutathione transferase activity"/>
    <property type="evidence" value="ECO:0000314"/>
    <property type="project" value="UniProtKB"/>
</dbReference>
<dbReference type="GO" id="GO:0018900">
    <property type="term" value="P:dichloromethane metabolic process"/>
    <property type="evidence" value="ECO:0000314"/>
    <property type="project" value="RGD"/>
</dbReference>
<dbReference type="GO" id="GO:0006304">
    <property type="term" value="P:DNA modification"/>
    <property type="evidence" value="ECO:0000314"/>
    <property type="project" value="RGD"/>
</dbReference>
<dbReference type="GO" id="GO:0006749">
    <property type="term" value="P:glutathione metabolic process"/>
    <property type="evidence" value="ECO:0000314"/>
    <property type="project" value="UniProtKB"/>
</dbReference>
<dbReference type="GO" id="GO:0009751">
    <property type="term" value="P:response to salicylic acid"/>
    <property type="evidence" value="ECO:0000270"/>
    <property type="project" value="RGD"/>
</dbReference>
<dbReference type="GO" id="GO:0010269">
    <property type="term" value="P:response to selenium ion"/>
    <property type="evidence" value="ECO:0000270"/>
    <property type="project" value="RGD"/>
</dbReference>
<dbReference type="GO" id="GO:0033197">
    <property type="term" value="P:response to vitamin E"/>
    <property type="evidence" value="ECO:0000270"/>
    <property type="project" value="RGD"/>
</dbReference>
<dbReference type="GO" id="GO:0009410">
    <property type="term" value="P:response to xenobiotic stimulus"/>
    <property type="evidence" value="ECO:0000270"/>
    <property type="project" value="RGD"/>
</dbReference>
<dbReference type="CDD" id="cd03183">
    <property type="entry name" value="GST_C_Theta"/>
    <property type="match status" value="1"/>
</dbReference>
<dbReference type="CDD" id="cd03050">
    <property type="entry name" value="GST_N_Theta"/>
    <property type="match status" value="1"/>
</dbReference>
<dbReference type="FunFam" id="1.20.1050.10:FF:000008">
    <property type="entry name" value="Glutathione S-transferase theta-1"/>
    <property type="match status" value="1"/>
</dbReference>
<dbReference type="FunFam" id="3.40.30.10:FF:000086">
    <property type="entry name" value="Glutathione S-transferase theta-1"/>
    <property type="match status" value="1"/>
</dbReference>
<dbReference type="Gene3D" id="1.20.1050.10">
    <property type="match status" value="1"/>
</dbReference>
<dbReference type="Gene3D" id="3.40.30.10">
    <property type="entry name" value="Glutaredoxin"/>
    <property type="match status" value="1"/>
</dbReference>
<dbReference type="InterPro" id="IPR010987">
    <property type="entry name" value="Glutathione-S-Trfase_C-like"/>
</dbReference>
<dbReference type="InterPro" id="IPR036282">
    <property type="entry name" value="Glutathione-S-Trfase_C_sf"/>
</dbReference>
<dbReference type="InterPro" id="IPR040079">
    <property type="entry name" value="Glutathione_S-Trfase"/>
</dbReference>
<dbReference type="InterPro" id="IPR004045">
    <property type="entry name" value="Glutathione_S-Trfase_N"/>
</dbReference>
<dbReference type="InterPro" id="IPR004046">
    <property type="entry name" value="GST_C"/>
</dbReference>
<dbReference type="InterPro" id="IPR040077">
    <property type="entry name" value="GST_C_Theta"/>
</dbReference>
<dbReference type="InterPro" id="IPR040075">
    <property type="entry name" value="GST_N_Theta"/>
</dbReference>
<dbReference type="InterPro" id="IPR051369">
    <property type="entry name" value="GST_Theta"/>
</dbReference>
<dbReference type="InterPro" id="IPR036249">
    <property type="entry name" value="Thioredoxin-like_sf"/>
</dbReference>
<dbReference type="PANTHER" id="PTHR43917">
    <property type="match status" value="1"/>
</dbReference>
<dbReference type="PANTHER" id="PTHR43917:SF9">
    <property type="entry name" value="GLUTATHIONE S-TRANSFERASE THETA-1"/>
    <property type="match status" value="1"/>
</dbReference>
<dbReference type="Pfam" id="PF00043">
    <property type="entry name" value="GST_C"/>
    <property type="match status" value="1"/>
</dbReference>
<dbReference type="Pfam" id="PF02798">
    <property type="entry name" value="GST_N"/>
    <property type="match status" value="1"/>
</dbReference>
<dbReference type="SFLD" id="SFLDS00019">
    <property type="entry name" value="Glutathione_Transferase_(cytos"/>
    <property type="match status" value="1"/>
</dbReference>
<dbReference type="SFLD" id="SFLDG01153">
    <property type="entry name" value="Main.4:_Theta-like"/>
    <property type="match status" value="1"/>
</dbReference>
<dbReference type="SUPFAM" id="SSF47616">
    <property type="entry name" value="GST C-terminal domain-like"/>
    <property type="match status" value="1"/>
</dbReference>
<dbReference type="SUPFAM" id="SSF52833">
    <property type="entry name" value="Thioredoxin-like"/>
    <property type="match status" value="1"/>
</dbReference>
<dbReference type="PROSITE" id="PS50405">
    <property type="entry name" value="GST_CTER"/>
    <property type="match status" value="1"/>
</dbReference>
<dbReference type="PROSITE" id="PS50404">
    <property type="entry name" value="GST_NTER"/>
    <property type="match status" value="1"/>
</dbReference>
<gene>
    <name type="primary">Gstt1</name>
</gene>
<keyword id="KW-0963">Cytoplasm</keyword>
<keyword id="KW-0903">Direct protein sequencing</keyword>
<keyword id="KW-1185">Reference proteome</keyword>
<keyword id="KW-0808">Transferase</keyword>
<evidence type="ECO:0000250" key="1"/>
<evidence type="ECO:0000269" key="2">
    <source>
    </source>
</evidence>
<evidence type="ECO:0000269" key="3">
    <source>
    </source>
</evidence>
<evidence type="ECO:0000305" key="4"/>
<comment type="function">
    <text evidence="2">Conjugation of reduced glutathione to a wide number of exogenous and endogenous hydrophobic electrophiles. Also binds steroids, bilirubin, carcinogens and numerous organic anions. Has dichloromethane dehalogenase activity.</text>
</comment>
<comment type="catalytic activity">
    <reaction evidence="2">
        <text>RX + glutathione = an S-substituted glutathione + a halide anion + H(+)</text>
        <dbReference type="Rhea" id="RHEA:16437"/>
        <dbReference type="ChEBI" id="CHEBI:15378"/>
        <dbReference type="ChEBI" id="CHEBI:16042"/>
        <dbReference type="ChEBI" id="CHEBI:17792"/>
        <dbReference type="ChEBI" id="CHEBI:57925"/>
        <dbReference type="ChEBI" id="CHEBI:90779"/>
        <dbReference type="EC" id="2.5.1.18"/>
    </reaction>
</comment>
<comment type="subunit">
    <text>Homodimer.</text>
</comment>
<comment type="subcellular location">
    <subcellularLocation>
        <location>Cytoplasm</location>
    </subcellularLocation>
</comment>
<comment type="tissue specificity">
    <text evidence="3">In liver, highest expression found in central vein limiting plate hepatocytes. In lung, expressed mainly in club cells of the bronchiolar epithelium and, at low levels, in type II alveolar cells.</text>
</comment>
<comment type="similarity">
    <text evidence="4">Belongs to the GST superfamily. Theta family.</text>
</comment>